<protein>
    <recommendedName>
        <fullName evidence="1">tRNA(Met) cytidine acetate ligase</fullName>
        <ecNumber evidence="1">6.3.4.-</ecNumber>
    </recommendedName>
</protein>
<accession>Q601T9</accession>
<evidence type="ECO:0000255" key="1">
    <source>
        <dbReference type="HAMAP-Rule" id="MF_01539"/>
    </source>
</evidence>
<dbReference type="EC" id="6.3.4.-" evidence="1"/>
<dbReference type="EMBL" id="AE017332">
    <property type="protein sequence ID" value="AAV27716.1"/>
    <property type="molecule type" value="Genomic_DNA"/>
</dbReference>
<dbReference type="RefSeq" id="WP_011205950.1">
    <property type="nucleotide sequence ID" value="NC_006360.1"/>
</dbReference>
<dbReference type="SMR" id="Q601T9"/>
<dbReference type="KEGG" id="mhy:mhp112"/>
<dbReference type="eggNOG" id="COG1323">
    <property type="taxonomic scope" value="Bacteria"/>
</dbReference>
<dbReference type="HOGENOM" id="CLU_038915_1_0_14"/>
<dbReference type="PhylomeDB" id="Q601T9"/>
<dbReference type="Proteomes" id="UP000006822">
    <property type="component" value="Chromosome"/>
</dbReference>
<dbReference type="GO" id="GO:0005737">
    <property type="term" value="C:cytoplasm"/>
    <property type="evidence" value="ECO:0007669"/>
    <property type="project" value="UniProtKB-SubCell"/>
</dbReference>
<dbReference type="GO" id="GO:0005524">
    <property type="term" value="F:ATP binding"/>
    <property type="evidence" value="ECO:0007669"/>
    <property type="project" value="UniProtKB-KW"/>
</dbReference>
<dbReference type="GO" id="GO:0016879">
    <property type="term" value="F:ligase activity, forming carbon-nitrogen bonds"/>
    <property type="evidence" value="ECO:0007669"/>
    <property type="project" value="UniProtKB-UniRule"/>
</dbReference>
<dbReference type="GO" id="GO:0000049">
    <property type="term" value="F:tRNA binding"/>
    <property type="evidence" value="ECO:0007669"/>
    <property type="project" value="UniProtKB-KW"/>
</dbReference>
<dbReference type="GO" id="GO:0006400">
    <property type="term" value="P:tRNA modification"/>
    <property type="evidence" value="ECO:0007669"/>
    <property type="project" value="UniProtKB-UniRule"/>
</dbReference>
<dbReference type="Gene3D" id="3.40.50.620">
    <property type="entry name" value="HUPs"/>
    <property type="match status" value="1"/>
</dbReference>
<dbReference type="HAMAP" id="MF_01539">
    <property type="entry name" value="TmcAL"/>
    <property type="match status" value="1"/>
</dbReference>
<dbReference type="InterPro" id="IPR014729">
    <property type="entry name" value="Rossmann-like_a/b/a_fold"/>
</dbReference>
<dbReference type="InterPro" id="IPR008513">
    <property type="entry name" value="tRNA(Met)_cyd_acetate_ligase"/>
</dbReference>
<dbReference type="NCBIfam" id="NF010192">
    <property type="entry name" value="PRK13671.1"/>
    <property type="match status" value="1"/>
</dbReference>
<dbReference type="PANTHER" id="PTHR37825">
    <property type="entry name" value="TRNA(MET) CYTIDINE ACETATE LIGASE"/>
    <property type="match status" value="1"/>
</dbReference>
<dbReference type="PANTHER" id="PTHR37825:SF1">
    <property type="entry name" value="TRNA(MET) CYTIDINE ACETATE LIGASE"/>
    <property type="match status" value="1"/>
</dbReference>
<dbReference type="Pfam" id="PF05636">
    <property type="entry name" value="HIGH_NTase1"/>
    <property type="match status" value="1"/>
</dbReference>
<dbReference type="SUPFAM" id="SSF52374">
    <property type="entry name" value="Nucleotidylyl transferase"/>
    <property type="match status" value="1"/>
</dbReference>
<reference key="1">
    <citation type="journal article" date="2004" name="J. Bacteriol.">
        <title>The genome sequence of Mycoplasma hyopneumoniae strain 232, the agent of swine mycoplasmosis.</title>
        <authorList>
            <person name="Minion F.C."/>
            <person name="Lefkowitz E.J."/>
            <person name="Madsen M.L."/>
            <person name="Cleary B.J."/>
            <person name="Swartzell S.M."/>
            <person name="Mahairas G.G."/>
        </authorList>
    </citation>
    <scope>NUCLEOTIDE SEQUENCE [LARGE SCALE GENOMIC DNA]</scope>
    <source>
        <strain>232</strain>
    </source>
</reference>
<organism>
    <name type="scientific">Mesomycoplasma hyopneumoniae (strain 232)</name>
    <name type="common">Mycoplasma hyopneumoniae</name>
    <dbReference type="NCBI Taxonomy" id="295358"/>
    <lineage>
        <taxon>Bacteria</taxon>
        <taxon>Bacillati</taxon>
        <taxon>Mycoplasmatota</taxon>
        <taxon>Mycoplasmoidales</taxon>
        <taxon>Metamycoplasmataceae</taxon>
        <taxon>Mesomycoplasma</taxon>
    </lineage>
</organism>
<comment type="function">
    <text evidence="1">Catalyzes the formation of N(4)-acetylcytidine (ac(4)C) at the wobble position of elongator tRNA(Met), using acetate and ATP as substrates. First activates an acetate ion to form acetyladenylate (Ac-AMP) and then transfers the acetyl group to tRNA to form ac(4)C34.</text>
</comment>
<comment type="catalytic activity">
    <reaction evidence="1">
        <text>cytidine(34) in elongator tRNA(Met) + acetate + ATP = N(4)-acetylcytidine(34) in elongator tRNA(Met) + AMP + diphosphate</text>
        <dbReference type="Rhea" id="RHEA:58144"/>
        <dbReference type="Rhea" id="RHEA-COMP:10693"/>
        <dbReference type="Rhea" id="RHEA-COMP:10694"/>
        <dbReference type="ChEBI" id="CHEBI:30089"/>
        <dbReference type="ChEBI" id="CHEBI:30616"/>
        <dbReference type="ChEBI" id="CHEBI:33019"/>
        <dbReference type="ChEBI" id="CHEBI:74900"/>
        <dbReference type="ChEBI" id="CHEBI:82748"/>
        <dbReference type="ChEBI" id="CHEBI:456215"/>
    </reaction>
</comment>
<comment type="subcellular location">
    <subcellularLocation>
        <location evidence="1">Cytoplasm</location>
    </subcellularLocation>
</comment>
<comment type="similarity">
    <text evidence="1">Belongs to the TmcAL family.</text>
</comment>
<gene>
    <name evidence="1" type="primary">tmcAL</name>
    <name type="ordered locus">mhp112</name>
</gene>
<feature type="chain" id="PRO_0000147174" description="tRNA(Met) cytidine acetate ligase">
    <location>
        <begin position="1"/>
        <end position="317"/>
    </location>
</feature>
<feature type="binding site" evidence="1">
    <location>
        <begin position="6"/>
        <end position="19"/>
    </location>
    <ligand>
        <name>ATP</name>
        <dbReference type="ChEBI" id="CHEBI:30616"/>
    </ligand>
</feature>
<feature type="binding site" evidence="1">
    <location>
        <position position="100"/>
    </location>
    <ligand>
        <name>ATP</name>
        <dbReference type="ChEBI" id="CHEBI:30616"/>
    </ligand>
</feature>
<feature type="binding site" evidence="1">
    <location>
        <position position="157"/>
    </location>
    <ligand>
        <name>ATP</name>
        <dbReference type="ChEBI" id="CHEBI:30616"/>
    </ligand>
</feature>
<feature type="binding site" evidence="1">
    <location>
        <position position="182"/>
    </location>
    <ligand>
        <name>ATP</name>
        <dbReference type="ChEBI" id="CHEBI:30616"/>
    </ligand>
</feature>
<sequence length="317" mass="36758">MAIAIIAEYNPFHNGHIYQLEYTKKNFPNDKIYIILSGNFTQRGEISLADFKTKSKIALKYGADFIIKLPFEYATQAAHIFAKGAIKIVNQHKIDKIIFGSESNDVENLYKLANLWNQNQEAYNAFLKYALKLGYSFPKASAFALEEISGQKIVFPNDILGFEYIKQIVANNYPIRAYTLKRSEEFSLKNPEPNIASATYLRQLVNENKSISRFSPMKFIHPVCSLANLYPEFQKIVRETSAENLAKIWLISEGIENLFKKHINEPNFEKFLNAVNSRRYTNSRIKRAMVYILFRIEDPSQFDEEKIQLDCWKNQGF</sequence>
<name>TMCAL_MESH2</name>
<proteinExistence type="inferred from homology"/>
<keyword id="KW-0067">ATP-binding</keyword>
<keyword id="KW-0963">Cytoplasm</keyword>
<keyword id="KW-0436">Ligase</keyword>
<keyword id="KW-0547">Nucleotide-binding</keyword>
<keyword id="KW-0694">RNA-binding</keyword>
<keyword id="KW-0819">tRNA processing</keyword>
<keyword id="KW-0820">tRNA-binding</keyword>